<comment type="subcellular location">
    <subcellularLocation>
        <location evidence="1 3">Nucleus</location>
    </subcellularLocation>
</comment>
<organism>
    <name type="scientific">Schizosaccharomyces pombe (strain 972 / ATCC 24843)</name>
    <name type="common">Fission yeast</name>
    <dbReference type="NCBI Taxonomy" id="284812"/>
    <lineage>
        <taxon>Eukaryota</taxon>
        <taxon>Fungi</taxon>
        <taxon>Dikarya</taxon>
        <taxon>Ascomycota</taxon>
        <taxon>Taphrinomycotina</taxon>
        <taxon>Schizosaccharomycetes</taxon>
        <taxon>Schizosaccharomycetales</taxon>
        <taxon>Schizosaccharomycetaceae</taxon>
        <taxon>Schizosaccharomyces</taxon>
    </lineage>
</organism>
<evidence type="ECO:0000255" key="1">
    <source>
        <dbReference type="PROSITE-ProRule" id="PRU00227"/>
    </source>
</evidence>
<evidence type="ECO:0000256" key="2">
    <source>
        <dbReference type="SAM" id="MobiDB-lite"/>
    </source>
</evidence>
<evidence type="ECO:0000269" key="3">
    <source>
    </source>
</evidence>
<name>YG55_SCHPO</name>
<sequence length="397" mass="42193">MDLHSILQPISTPSASVVTAPLPATIALPSPNYYYPPVAQGHYPVNNMWSLPSNVRVISSHGAPGHQTSASQPSTVMPALETNASNAQYYPAYSVINGNNSVQVASPAYTVSHSPHSFSNPRYVAVPQKSTSPNQVCSYCEPLPNHLTKTKSCSIPPILNSSDRSPLSLPTPYPVQYSTQPVSLPQPIAAPAPPSAESSKSTISDEDVAWQLIRLGALSSNSVKSSPSKSFVSISSPVQSTVKPTKASGVVKSEKVEKRSLPPQDFGNASSSTSAKRRRPDHNHTSTLDASSSNTSLASTGPMTVSSSTVERKGKEASEVNPNSTSSVTFSDFAAAISRSRCSRCKKSKKGCDRQRPCGRCRDAGLNSEDCISDDDMPVSNARKPRGRGRGRPKTKN</sequence>
<feature type="chain" id="PRO_0000351073" description="Uncharacterized transcriptional regulatory protein C56F2.05c">
    <location>
        <begin position="1"/>
        <end position="397"/>
    </location>
</feature>
<feature type="DNA-binding region" description="Zn(2)-C6 fungal-type" evidence="1">
    <location>
        <begin position="342"/>
        <end position="371"/>
    </location>
</feature>
<feature type="region of interest" description="Disordered" evidence="2">
    <location>
        <begin position="159"/>
        <end position="203"/>
    </location>
</feature>
<feature type="region of interest" description="Disordered" evidence="2">
    <location>
        <begin position="221"/>
        <end position="397"/>
    </location>
</feature>
<feature type="compositionally biased region" description="Low complexity" evidence="2">
    <location>
        <begin position="221"/>
        <end position="240"/>
    </location>
</feature>
<feature type="compositionally biased region" description="Polar residues" evidence="2">
    <location>
        <begin position="285"/>
        <end position="309"/>
    </location>
</feature>
<feature type="compositionally biased region" description="Polar residues" evidence="2">
    <location>
        <begin position="320"/>
        <end position="330"/>
    </location>
</feature>
<feature type="compositionally biased region" description="Basic and acidic residues" evidence="2">
    <location>
        <begin position="350"/>
        <end position="363"/>
    </location>
</feature>
<feature type="compositionally biased region" description="Basic residues" evidence="2">
    <location>
        <begin position="383"/>
        <end position="397"/>
    </location>
</feature>
<reference key="1">
    <citation type="journal article" date="2002" name="Nature">
        <title>The genome sequence of Schizosaccharomyces pombe.</title>
        <authorList>
            <person name="Wood V."/>
            <person name="Gwilliam R."/>
            <person name="Rajandream M.A."/>
            <person name="Lyne M.H."/>
            <person name="Lyne R."/>
            <person name="Stewart A."/>
            <person name="Sgouros J.G."/>
            <person name="Peat N."/>
            <person name="Hayles J."/>
            <person name="Baker S.G."/>
            <person name="Basham D."/>
            <person name="Bowman S."/>
            <person name="Brooks K."/>
            <person name="Brown D."/>
            <person name="Brown S."/>
            <person name="Chillingworth T."/>
            <person name="Churcher C.M."/>
            <person name="Collins M."/>
            <person name="Connor R."/>
            <person name="Cronin A."/>
            <person name="Davis P."/>
            <person name="Feltwell T."/>
            <person name="Fraser A."/>
            <person name="Gentles S."/>
            <person name="Goble A."/>
            <person name="Hamlin N."/>
            <person name="Harris D.E."/>
            <person name="Hidalgo J."/>
            <person name="Hodgson G."/>
            <person name="Holroyd S."/>
            <person name="Hornsby T."/>
            <person name="Howarth S."/>
            <person name="Huckle E.J."/>
            <person name="Hunt S."/>
            <person name="Jagels K."/>
            <person name="James K.D."/>
            <person name="Jones L."/>
            <person name="Jones M."/>
            <person name="Leather S."/>
            <person name="McDonald S."/>
            <person name="McLean J."/>
            <person name="Mooney P."/>
            <person name="Moule S."/>
            <person name="Mungall K.L."/>
            <person name="Murphy L.D."/>
            <person name="Niblett D."/>
            <person name="Odell C."/>
            <person name="Oliver K."/>
            <person name="O'Neil S."/>
            <person name="Pearson D."/>
            <person name="Quail M.A."/>
            <person name="Rabbinowitsch E."/>
            <person name="Rutherford K.M."/>
            <person name="Rutter S."/>
            <person name="Saunders D."/>
            <person name="Seeger K."/>
            <person name="Sharp S."/>
            <person name="Skelton J."/>
            <person name="Simmonds M.N."/>
            <person name="Squares R."/>
            <person name="Squares S."/>
            <person name="Stevens K."/>
            <person name="Taylor K."/>
            <person name="Taylor R.G."/>
            <person name="Tivey A."/>
            <person name="Walsh S.V."/>
            <person name="Warren T."/>
            <person name="Whitehead S."/>
            <person name="Woodward J.R."/>
            <person name="Volckaert G."/>
            <person name="Aert R."/>
            <person name="Robben J."/>
            <person name="Grymonprez B."/>
            <person name="Weltjens I."/>
            <person name="Vanstreels E."/>
            <person name="Rieger M."/>
            <person name="Schaefer M."/>
            <person name="Mueller-Auer S."/>
            <person name="Gabel C."/>
            <person name="Fuchs M."/>
            <person name="Duesterhoeft A."/>
            <person name="Fritzc C."/>
            <person name="Holzer E."/>
            <person name="Moestl D."/>
            <person name="Hilbert H."/>
            <person name="Borzym K."/>
            <person name="Langer I."/>
            <person name="Beck A."/>
            <person name="Lehrach H."/>
            <person name="Reinhardt R."/>
            <person name="Pohl T.M."/>
            <person name="Eger P."/>
            <person name="Zimmermann W."/>
            <person name="Wedler H."/>
            <person name="Wambutt R."/>
            <person name="Purnelle B."/>
            <person name="Goffeau A."/>
            <person name="Cadieu E."/>
            <person name="Dreano S."/>
            <person name="Gloux S."/>
            <person name="Lelaure V."/>
            <person name="Mottier S."/>
            <person name="Galibert F."/>
            <person name="Aves S.J."/>
            <person name="Xiang Z."/>
            <person name="Hunt C."/>
            <person name="Moore K."/>
            <person name="Hurst S.M."/>
            <person name="Lucas M."/>
            <person name="Rochet M."/>
            <person name="Gaillardin C."/>
            <person name="Tallada V.A."/>
            <person name="Garzon A."/>
            <person name="Thode G."/>
            <person name="Daga R.R."/>
            <person name="Cruzado L."/>
            <person name="Jimenez J."/>
            <person name="Sanchez M."/>
            <person name="del Rey F."/>
            <person name="Benito J."/>
            <person name="Dominguez A."/>
            <person name="Revuelta J.L."/>
            <person name="Moreno S."/>
            <person name="Armstrong J."/>
            <person name="Forsburg S.L."/>
            <person name="Cerutti L."/>
            <person name="Lowe T."/>
            <person name="McCombie W.R."/>
            <person name="Paulsen I."/>
            <person name="Potashkin J."/>
            <person name="Shpakovski G.V."/>
            <person name="Ussery D."/>
            <person name="Barrell B.G."/>
            <person name="Nurse P."/>
        </authorList>
    </citation>
    <scope>NUCLEOTIDE SEQUENCE [LARGE SCALE GENOMIC DNA]</scope>
    <source>
        <strain>972 / ATCC 24843</strain>
    </source>
</reference>
<reference key="2">
    <citation type="journal article" date="2006" name="Nat. Biotechnol.">
        <title>ORFeome cloning and global analysis of protein localization in the fission yeast Schizosaccharomyces pombe.</title>
        <authorList>
            <person name="Matsuyama A."/>
            <person name="Arai R."/>
            <person name="Yashiroda Y."/>
            <person name="Shirai A."/>
            <person name="Kamata A."/>
            <person name="Sekido S."/>
            <person name="Kobayashi Y."/>
            <person name="Hashimoto A."/>
            <person name="Hamamoto M."/>
            <person name="Hiraoka Y."/>
            <person name="Horinouchi S."/>
            <person name="Yoshida M."/>
        </authorList>
    </citation>
    <scope>SUBCELLULAR LOCATION [LARGE SCALE ANALYSIS]</scope>
</reference>
<protein>
    <recommendedName>
        <fullName>Uncharacterized transcriptional regulatory protein C56F2.05c</fullName>
    </recommendedName>
</protein>
<dbReference type="EMBL" id="CU329671">
    <property type="protein sequence ID" value="CAA18884.1"/>
    <property type="molecule type" value="Genomic_DNA"/>
</dbReference>
<dbReference type="PIR" id="T40539">
    <property type="entry name" value="T40539"/>
</dbReference>
<dbReference type="RefSeq" id="NP_596712.1">
    <property type="nucleotide sequence ID" value="NM_001022637.2"/>
</dbReference>
<dbReference type="BioGRID" id="277471">
    <property type="interactions" value="2"/>
</dbReference>
<dbReference type="iPTMnet" id="O60056"/>
<dbReference type="PaxDb" id="4896-SPBC56F2.05c.1"/>
<dbReference type="EnsemblFungi" id="SPBC56F2.05c.1">
    <property type="protein sequence ID" value="SPBC56F2.05c.1:pep"/>
    <property type="gene ID" value="SPBC56F2.05c"/>
</dbReference>
<dbReference type="KEGG" id="spo:2540955"/>
<dbReference type="PomBase" id="SPBC56F2.05c"/>
<dbReference type="VEuPathDB" id="FungiDB:SPBC56F2.05c"/>
<dbReference type="eggNOG" id="ENOG502SAWI">
    <property type="taxonomic scope" value="Eukaryota"/>
</dbReference>
<dbReference type="HOGENOM" id="CLU_694755_0_0_1"/>
<dbReference type="InParanoid" id="O60056"/>
<dbReference type="OMA" id="GGTHEAK"/>
<dbReference type="PRO" id="PR:O60056"/>
<dbReference type="Proteomes" id="UP000002485">
    <property type="component" value="Chromosome II"/>
</dbReference>
<dbReference type="GO" id="GO:0005634">
    <property type="term" value="C:nucleus"/>
    <property type="evidence" value="ECO:0007005"/>
    <property type="project" value="PomBase"/>
</dbReference>
<dbReference type="GO" id="GO:0000981">
    <property type="term" value="F:DNA-binding transcription factor activity, RNA polymerase II-specific"/>
    <property type="evidence" value="ECO:0000255"/>
    <property type="project" value="PomBase"/>
</dbReference>
<dbReference type="GO" id="GO:0000978">
    <property type="term" value="F:RNA polymerase II cis-regulatory region sequence-specific DNA binding"/>
    <property type="evidence" value="ECO:0000255"/>
    <property type="project" value="PomBase"/>
</dbReference>
<dbReference type="GO" id="GO:0008270">
    <property type="term" value="F:zinc ion binding"/>
    <property type="evidence" value="ECO:0000255"/>
    <property type="project" value="PomBase"/>
</dbReference>
<dbReference type="GO" id="GO:0006357">
    <property type="term" value="P:regulation of transcription by RNA polymerase II"/>
    <property type="evidence" value="ECO:0000255"/>
    <property type="project" value="PomBase"/>
</dbReference>
<dbReference type="CDD" id="cd00067">
    <property type="entry name" value="GAL4"/>
    <property type="match status" value="1"/>
</dbReference>
<dbReference type="InterPro" id="IPR036864">
    <property type="entry name" value="Zn2-C6_fun-type_DNA-bd_sf"/>
</dbReference>
<dbReference type="InterPro" id="IPR001138">
    <property type="entry name" value="Zn2Cys6_DnaBD"/>
</dbReference>
<dbReference type="SUPFAM" id="SSF57701">
    <property type="entry name" value="Zn2/Cys6 DNA-binding domain"/>
    <property type="match status" value="1"/>
</dbReference>
<dbReference type="PROSITE" id="PS50048">
    <property type="entry name" value="ZN2_CY6_FUNGAL_2"/>
    <property type="match status" value="1"/>
</dbReference>
<keyword id="KW-0238">DNA-binding</keyword>
<keyword id="KW-0479">Metal-binding</keyword>
<keyword id="KW-0539">Nucleus</keyword>
<keyword id="KW-1185">Reference proteome</keyword>
<keyword id="KW-0804">Transcription</keyword>
<keyword id="KW-0805">Transcription regulation</keyword>
<keyword id="KW-0862">Zinc</keyword>
<accession>O60056</accession>
<proteinExistence type="inferred from homology"/>
<gene>
    <name type="ORF">SPBC56F2.05c</name>
</gene>